<proteinExistence type="inferred from homology"/>
<dbReference type="EC" id="2.4.99.28" evidence="2"/>
<dbReference type="EMBL" id="FM178379">
    <property type="protein sequence ID" value="CAQ80329.1"/>
    <property type="molecule type" value="Genomic_DNA"/>
</dbReference>
<dbReference type="RefSeq" id="WP_012551100.1">
    <property type="nucleotide sequence ID" value="NC_011312.1"/>
</dbReference>
<dbReference type="SMR" id="B6ELH6"/>
<dbReference type="KEGG" id="vsa:VSAL_I2645"/>
<dbReference type="eggNOG" id="COG0772">
    <property type="taxonomic scope" value="Bacteria"/>
</dbReference>
<dbReference type="HOGENOM" id="CLU_029243_1_1_6"/>
<dbReference type="UniPathway" id="UPA00219"/>
<dbReference type="Proteomes" id="UP000001730">
    <property type="component" value="Chromosome 1"/>
</dbReference>
<dbReference type="GO" id="GO:0032153">
    <property type="term" value="C:cell division site"/>
    <property type="evidence" value="ECO:0007669"/>
    <property type="project" value="UniProtKB-UniRule"/>
</dbReference>
<dbReference type="GO" id="GO:0005886">
    <property type="term" value="C:plasma membrane"/>
    <property type="evidence" value="ECO:0007669"/>
    <property type="project" value="UniProtKB-SubCell"/>
</dbReference>
<dbReference type="GO" id="GO:0015648">
    <property type="term" value="F:lipid-linked peptidoglycan transporter activity"/>
    <property type="evidence" value="ECO:0007669"/>
    <property type="project" value="TreeGrafter"/>
</dbReference>
<dbReference type="GO" id="GO:0008955">
    <property type="term" value="F:peptidoglycan glycosyltransferase activity"/>
    <property type="evidence" value="ECO:0007669"/>
    <property type="project" value="UniProtKB-UniRule"/>
</dbReference>
<dbReference type="GO" id="GO:0071555">
    <property type="term" value="P:cell wall organization"/>
    <property type="evidence" value="ECO:0007669"/>
    <property type="project" value="UniProtKB-KW"/>
</dbReference>
<dbReference type="GO" id="GO:0043093">
    <property type="term" value="P:FtsZ-dependent cytokinesis"/>
    <property type="evidence" value="ECO:0007669"/>
    <property type="project" value="UniProtKB-UniRule"/>
</dbReference>
<dbReference type="GO" id="GO:0009252">
    <property type="term" value="P:peptidoglycan biosynthetic process"/>
    <property type="evidence" value="ECO:0007669"/>
    <property type="project" value="UniProtKB-UniRule"/>
</dbReference>
<dbReference type="GO" id="GO:0008360">
    <property type="term" value="P:regulation of cell shape"/>
    <property type="evidence" value="ECO:0007669"/>
    <property type="project" value="UniProtKB-KW"/>
</dbReference>
<dbReference type="HAMAP" id="MF_00913">
    <property type="entry name" value="PGT_FtsW_proteobact"/>
    <property type="match status" value="1"/>
</dbReference>
<dbReference type="InterPro" id="IPR018365">
    <property type="entry name" value="Cell_cycle_FtsW-rel_CS"/>
</dbReference>
<dbReference type="InterPro" id="IPR013437">
    <property type="entry name" value="FtsW"/>
</dbReference>
<dbReference type="InterPro" id="IPR001182">
    <property type="entry name" value="FtsW/RodA"/>
</dbReference>
<dbReference type="NCBIfam" id="TIGR02614">
    <property type="entry name" value="ftsW"/>
    <property type="match status" value="1"/>
</dbReference>
<dbReference type="NCBIfam" id="NF008042">
    <property type="entry name" value="PRK10774.1"/>
    <property type="match status" value="1"/>
</dbReference>
<dbReference type="PANTHER" id="PTHR30474">
    <property type="entry name" value="CELL CYCLE PROTEIN"/>
    <property type="match status" value="1"/>
</dbReference>
<dbReference type="PANTHER" id="PTHR30474:SF2">
    <property type="entry name" value="PEPTIDOGLYCAN GLYCOSYLTRANSFERASE FTSW-RELATED"/>
    <property type="match status" value="1"/>
</dbReference>
<dbReference type="Pfam" id="PF01098">
    <property type="entry name" value="FTSW_RODA_SPOVE"/>
    <property type="match status" value="1"/>
</dbReference>
<dbReference type="PROSITE" id="PS00428">
    <property type="entry name" value="FTSW_RODA_SPOVE"/>
    <property type="match status" value="1"/>
</dbReference>
<keyword id="KW-0131">Cell cycle</keyword>
<keyword id="KW-0132">Cell division</keyword>
<keyword id="KW-0997">Cell inner membrane</keyword>
<keyword id="KW-1003">Cell membrane</keyword>
<keyword id="KW-0133">Cell shape</keyword>
<keyword id="KW-0961">Cell wall biogenesis/degradation</keyword>
<keyword id="KW-0328">Glycosyltransferase</keyword>
<keyword id="KW-0472">Membrane</keyword>
<keyword id="KW-0573">Peptidoglycan synthesis</keyword>
<keyword id="KW-0808">Transferase</keyword>
<keyword id="KW-0812">Transmembrane</keyword>
<keyword id="KW-1133">Transmembrane helix</keyword>
<gene>
    <name evidence="2" type="primary">ftsW</name>
    <name type="ordered locus">VSAL_I2645</name>
</gene>
<reference key="1">
    <citation type="journal article" date="2008" name="BMC Genomics">
        <title>The genome sequence of the fish pathogen Aliivibrio salmonicida strain LFI1238 shows extensive evidence of gene decay.</title>
        <authorList>
            <person name="Hjerde E."/>
            <person name="Lorentzen M.S."/>
            <person name="Holden M.T."/>
            <person name="Seeger K."/>
            <person name="Paulsen S."/>
            <person name="Bason N."/>
            <person name="Churcher C."/>
            <person name="Harris D."/>
            <person name="Norbertczak H."/>
            <person name="Quail M.A."/>
            <person name="Sanders S."/>
            <person name="Thurston S."/>
            <person name="Parkhill J."/>
            <person name="Willassen N.P."/>
            <person name="Thomson N.R."/>
        </authorList>
    </citation>
    <scope>NUCLEOTIDE SEQUENCE [LARGE SCALE GENOMIC DNA]</scope>
    <source>
        <strain>LFI1238</strain>
    </source>
</reference>
<sequence>MVIERIKHLASPLQDWVFTPSPKVMFDRQLIWIALGLMLTGLVMVASASFPISTRLTGQPFHFMMRHMLFVFLALSISSIVLRIELNKWLKYSSHLLLISLLLLAAVLVVGKSVNGAARWLPLGIFNLQPAEVAKLSLFVFIAGYLVRRHGEVRDSFRGFVKPLLVLITLAFFLLMQPDLGTTVVMFVTTIAMLFIAGAKLWQFIALVMGGISLVIVLILAEPYRMRRVTSFLDPWQDPFGSGYQLTQSLMAFGRGSWFGEGLGNSIQKLEYLPEAHTDFVFAVIAEELGFVGVCLVLCLIFALVFKALLIGRKCLAHDQRFGGFLAFGIGIWFAFQTLVNVGAAAGIVPTKGLTLPLISYGGSSLIIMSVAVSLLIRIDHECRVYLANEPPRSENEEQK</sequence>
<accession>B6ELH6</accession>
<protein>
    <recommendedName>
        <fullName evidence="2">Probable peptidoglycan glycosyltransferase FtsW</fullName>
        <shortName evidence="2">PGT</shortName>
        <ecNumber evidence="2">2.4.99.28</ecNumber>
    </recommendedName>
    <alternativeName>
        <fullName evidence="2">Cell division protein FtsW</fullName>
    </alternativeName>
    <alternativeName>
        <fullName evidence="2">Cell wall polymerase</fullName>
    </alternativeName>
    <alternativeName>
        <fullName evidence="2">Peptidoglycan polymerase</fullName>
        <shortName evidence="2">PG polymerase</shortName>
    </alternativeName>
</protein>
<name>FTSW_ALISL</name>
<evidence type="ECO:0000255" key="1"/>
<evidence type="ECO:0000255" key="2">
    <source>
        <dbReference type="HAMAP-Rule" id="MF_00913"/>
    </source>
</evidence>
<organism>
    <name type="scientific">Aliivibrio salmonicida (strain LFI1238)</name>
    <name type="common">Vibrio salmonicida (strain LFI1238)</name>
    <dbReference type="NCBI Taxonomy" id="316275"/>
    <lineage>
        <taxon>Bacteria</taxon>
        <taxon>Pseudomonadati</taxon>
        <taxon>Pseudomonadota</taxon>
        <taxon>Gammaproteobacteria</taxon>
        <taxon>Vibrionales</taxon>
        <taxon>Vibrionaceae</taxon>
        <taxon>Aliivibrio</taxon>
    </lineage>
</organism>
<feature type="chain" id="PRO_0000415171" description="Probable peptidoglycan glycosyltransferase FtsW">
    <location>
        <begin position="1"/>
        <end position="400"/>
    </location>
</feature>
<feature type="topological domain" description="Cytoplasmic" evidence="1">
    <location>
        <begin position="1"/>
        <end position="29"/>
    </location>
</feature>
<feature type="transmembrane region" description="Helical" evidence="2">
    <location>
        <begin position="30"/>
        <end position="50"/>
    </location>
</feature>
<feature type="topological domain" description="Periplasmic" evidence="1">
    <location>
        <begin position="51"/>
        <end position="60"/>
    </location>
</feature>
<feature type="transmembrane region" description="Helical" evidence="2">
    <location>
        <begin position="61"/>
        <end position="81"/>
    </location>
</feature>
<feature type="topological domain" description="Cytoplasmic" evidence="1">
    <location>
        <begin position="82"/>
        <end position="95"/>
    </location>
</feature>
<feature type="transmembrane region" description="Helical" evidence="2">
    <location>
        <begin position="96"/>
        <end position="116"/>
    </location>
</feature>
<feature type="topological domain" description="Periplasmic" evidence="1">
    <location>
        <begin position="117"/>
        <end position="122"/>
    </location>
</feature>
<feature type="transmembrane region" description="Helical" evidence="2">
    <location>
        <begin position="123"/>
        <end position="143"/>
    </location>
</feature>
<feature type="topological domain" description="Cytoplasmic" evidence="1">
    <location>
        <begin position="144"/>
        <end position="155"/>
    </location>
</feature>
<feature type="transmembrane region" description="Helical" evidence="2">
    <location>
        <begin position="156"/>
        <end position="176"/>
    </location>
</feature>
<feature type="topological domain" description="Periplasmic" evidence="1">
    <location>
        <begin position="177"/>
        <end position="178"/>
    </location>
</feature>
<feature type="transmembrane region" description="Helical" evidence="2">
    <location>
        <begin position="179"/>
        <end position="199"/>
    </location>
</feature>
<feature type="topological domain" description="Cytoplasmic" evidence="1">
    <location>
        <position position="200"/>
    </location>
</feature>
<feature type="transmembrane region" description="Helical" evidence="2">
    <location>
        <begin position="201"/>
        <end position="221"/>
    </location>
</feature>
<feature type="topological domain" description="Periplasmic" evidence="1">
    <location>
        <begin position="222"/>
        <end position="290"/>
    </location>
</feature>
<feature type="transmembrane region" description="Helical" evidence="2">
    <location>
        <begin position="291"/>
        <end position="311"/>
    </location>
</feature>
<feature type="topological domain" description="Cytoplasmic" evidence="1">
    <location>
        <begin position="312"/>
        <end position="321"/>
    </location>
</feature>
<feature type="transmembrane region" description="Helical" evidence="2">
    <location>
        <begin position="322"/>
        <end position="342"/>
    </location>
</feature>
<feature type="topological domain" description="Periplasmic" evidence="1">
    <location>
        <begin position="343"/>
        <end position="356"/>
    </location>
</feature>
<feature type="transmembrane region" description="Helical" evidence="2">
    <location>
        <begin position="357"/>
        <end position="377"/>
    </location>
</feature>
<feature type="topological domain" description="Cytoplasmic" evidence="1">
    <location>
        <begin position="378"/>
        <end position="400"/>
    </location>
</feature>
<comment type="function">
    <text evidence="2">Peptidoglycan polymerase that is essential for cell division.</text>
</comment>
<comment type="catalytic activity">
    <reaction evidence="2">
        <text>[GlcNAc-(1-&gt;4)-Mur2Ac(oyl-L-Ala-gamma-D-Glu-L-Lys-D-Ala-D-Ala)](n)-di-trans,octa-cis-undecaprenyl diphosphate + beta-D-GlcNAc-(1-&gt;4)-Mur2Ac(oyl-L-Ala-gamma-D-Glu-L-Lys-D-Ala-D-Ala)-di-trans,octa-cis-undecaprenyl diphosphate = [GlcNAc-(1-&gt;4)-Mur2Ac(oyl-L-Ala-gamma-D-Glu-L-Lys-D-Ala-D-Ala)](n+1)-di-trans,octa-cis-undecaprenyl diphosphate + di-trans,octa-cis-undecaprenyl diphosphate + H(+)</text>
        <dbReference type="Rhea" id="RHEA:23708"/>
        <dbReference type="Rhea" id="RHEA-COMP:9602"/>
        <dbReference type="Rhea" id="RHEA-COMP:9603"/>
        <dbReference type="ChEBI" id="CHEBI:15378"/>
        <dbReference type="ChEBI" id="CHEBI:58405"/>
        <dbReference type="ChEBI" id="CHEBI:60033"/>
        <dbReference type="ChEBI" id="CHEBI:78435"/>
        <dbReference type="EC" id="2.4.99.28"/>
    </reaction>
</comment>
<comment type="pathway">
    <text evidence="2">Cell wall biogenesis; peptidoglycan biosynthesis.</text>
</comment>
<comment type="subcellular location">
    <subcellularLocation>
        <location evidence="2">Cell inner membrane</location>
        <topology evidence="2">Multi-pass membrane protein</topology>
    </subcellularLocation>
    <text evidence="2">Localizes to the division septum.</text>
</comment>
<comment type="similarity">
    <text evidence="2">Belongs to the SEDS family. FtsW subfamily.</text>
</comment>